<feature type="chain" id="PRO_0000162335" description="UPF0060 membrane protein NFA_36830">
    <location>
        <begin position="1"/>
        <end position="111"/>
    </location>
</feature>
<feature type="transmembrane region" description="Helical" evidence="1">
    <location>
        <begin position="7"/>
        <end position="27"/>
    </location>
</feature>
<feature type="transmembrane region" description="Helical" evidence="1">
    <location>
        <begin position="33"/>
        <end position="53"/>
    </location>
</feature>
<feature type="transmembrane region" description="Helical" evidence="1">
    <location>
        <begin position="62"/>
        <end position="82"/>
    </location>
</feature>
<feature type="transmembrane region" description="Helical" evidence="1">
    <location>
        <begin position="91"/>
        <end position="111"/>
    </location>
</feature>
<accession>Q5YTG0</accession>
<organism>
    <name type="scientific">Nocardia farcinica (strain IFM 10152)</name>
    <dbReference type="NCBI Taxonomy" id="247156"/>
    <lineage>
        <taxon>Bacteria</taxon>
        <taxon>Bacillati</taxon>
        <taxon>Actinomycetota</taxon>
        <taxon>Actinomycetes</taxon>
        <taxon>Mycobacteriales</taxon>
        <taxon>Nocardiaceae</taxon>
        <taxon>Nocardia</taxon>
    </lineage>
</organism>
<comment type="subcellular location">
    <subcellularLocation>
        <location evidence="1">Cell membrane</location>
        <topology evidence="1">Multi-pass membrane protein</topology>
    </subcellularLocation>
</comment>
<comment type="similarity">
    <text evidence="1">Belongs to the UPF0060 family.</text>
</comment>
<protein>
    <recommendedName>
        <fullName evidence="1">UPF0060 membrane protein NFA_36830</fullName>
    </recommendedName>
</protein>
<reference key="1">
    <citation type="journal article" date="2004" name="Proc. Natl. Acad. Sci. U.S.A.">
        <title>The complete genomic sequence of Nocardia farcinica IFM 10152.</title>
        <authorList>
            <person name="Ishikawa J."/>
            <person name="Yamashita A."/>
            <person name="Mikami Y."/>
            <person name="Hoshino Y."/>
            <person name="Kurita H."/>
            <person name="Hotta K."/>
            <person name="Shiba T."/>
            <person name="Hattori M."/>
        </authorList>
    </citation>
    <scope>NUCLEOTIDE SEQUENCE [LARGE SCALE GENOMIC DNA]</scope>
    <source>
        <strain>IFM 10152</strain>
    </source>
</reference>
<keyword id="KW-1003">Cell membrane</keyword>
<keyword id="KW-0472">Membrane</keyword>
<keyword id="KW-1185">Reference proteome</keyword>
<keyword id="KW-0812">Transmembrane</keyword>
<keyword id="KW-1133">Transmembrane helix</keyword>
<gene>
    <name type="ordered locus">NFA_36830</name>
</gene>
<evidence type="ECO:0000255" key="1">
    <source>
        <dbReference type="HAMAP-Rule" id="MF_00010"/>
    </source>
</evidence>
<name>Y3683_NOCFA</name>
<dbReference type="EMBL" id="AP006618">
    <property type="protein sequence ID" value="BAD58531.1"/>
    <property type="molecule type" value="Genomic_DNA"/>
</dbReference>
<dbReference type="RefSeq" id="WP_011210216.1">
    <property type="nucleotide sequence ID" value="NC_006361.1"/>
</dbReference>
<dbReference type="SMR" id="Q5YTG0"/>
<dbReference type="STRING" id="247156.NFA_36830"/>
<dbReference type="GeneID" id="61134376"/>
<dbReference type="KEGG" id="nfa:NFA_36830"/>
<dbReference type="eggNOG" id="COG1742">
    <property type="taxonomic scope" value="Bacteria"/>
</dbReference>
<dbReference type="HOGENOM" id="CLU_117653_0_1_11"/>
<dbReference type="OrthoDB" id="123240at2"/>
<dbReference type="Proteomes" id="UP000006820">
    <property type="component" value="Chromosome"/>
</dbReference>
<dbReference type="GO" id="GO:0005886">
    <property type="term" value="C:plasma membrane"/>
    <property type="evidence" value="ECO:0007669"/>
    <property type="project" value="UniProtKB-SubCell"/>
</dbReference>
<dbReference type="HAMAP" id="MF_00010">
    <property type="entry name" value="UPF0060"/>
    <property type="match status" value="1"/>
</dbReference>
<dbReference type="InterPro" id="IPR003844">
    <property type="entry name" value="UPF0060"/>
</dbReference>
<dbReference type="NCBIfam" id="NF002586">
    <property type="entry name" value="PRK02237.1"/>
    <property type="match status" value="1"/>
</dbReference>
<dbReference type="PANTHER" id="PTHR36116">
    <property type="entry name" value="UPF0060 MEMBRANE PROTEIN YNFA"/>
    <property type="match status" value="1"/>
</dbReference>
<dbReference type="PANTHER" id="PTHR36116:SF1">
    <property type="entry name" value="UPF0060 MEMBRANE PROTEIN YNFA"/>
    <property type="match status" value="1"/>
</dbReference>
<dbReference type="Pfam" id="PF02694">
    <property type="entry name" value="UPF0060"/>
    <property type="match status" value="1"/>
</dbReference>
<dbReference type="SUPFAM" id="SSF103481">
    <property type="entry name" value="Multidrug resistance efflux transporter EmrE"/>
    <property type="match status" value="1"/>
</dbReference>
<sequence length="111" mass="11932">MTVLRSLVLFGLAALAEIGGAWLVWQGWREHRGLWWIAAGVIALGAYGFVATFQPDPDFGRVLAAYGGVFVVGSLAWGVLVDRFRPDRWDLLGAGICLVGVAVIMYAPRGG</sequence>
<proteinExistence type="inferred from homology"/>